<sequence>MLDIKRLRKDFAGIREKLQTRGEDISGLEKFGSLDEKRRQVIVKVEELKSRRNQVSQEVAQLKREKKDADHLIKEMRDVSDEIKGLDETLRQLDEELDQLLLAIPNVPHESTPVGETEDDNVEVRKWGEVPNFPFEPKAHWDLATALGIVDFERAAKVTGSRFAFYKGAGARLERALINFMMDLHHDKHGYEEVLPPYLVNRTSMTGTGQLPKFEEDAFKIREEDYFLIPTAEVPVTNLHRDEILSADQLPIAYTAYSMNFRSEAGSAGRDTRGLIRQHQFNKVELVRFVAPEDSYDELEKLTGHAEKVLQLLKLPYRVMSMCTADLGFTAAKKYDLEVWIPSANTYREISSCSNFEDFQARRANIKFRREAKGKAEFVHTLNGSGLAVGRTVAAILENYQQEDGTIVIPEVLRPYMGGMEKFEA</sequence>
<protein>
    <recommendedName>
        <fullName evidence="1">Serine--tRNA ligase</fullName>
        <ecNumber evidence="1">6.1.1.11</ecNumber>
    </recommendedName>
    <alternativeName>
        <fullName evidence="1">Seryl-tRNA synthetase</fullName>
        <shortName evidence="1">SerRS</shortName>
    </alternativeName>
    <alternativeName>
        <fullName evidence="1">Seryl-tRNA(Ser/Sec) synthetase</fullName>
    </alternativeName>
</protein>
<comment type="function">
    <text evidence="1">Catalyzes the attachment of serine to tRNA(Ser). Is also able to aminoacylate tRNA(Sec) with serine, to form the misacylated tRNA L-seryl-tRNA(Sec), which will be further converted into selenocysteinyl-tRNA(Sec).</text>
</comment>
<comment type="catalytic activity">
    <reaction evidence="1">
        <text>tRNA(Ser) + L-serine + ATP = L-seryl-tRNA(Ser) + AMP + diphosphate + H(+)</text>
        <dbReference type="Rhea" id="RHEA:12292"/>
        <dbReference type="Rhea" id="RHEA-COMP:9669"/>
        <dbReference type="Rhea" id="RHEA-COMP:9703"/>
        <dbReference type="ChEBI" id="CHEBI:15378"/>
        <dbReference type="ChEBI" id="CHEBI:30616"/>
        <dbReference type="ChEBI" id="CHEBI:33019"/>
        <dbReference type="ChEBI" id="CHEBI:33384"/>
        <dbReference type="ChEBI" id="CHEBI:78442"/>
        <dbReference type="ChEBI" id="CHEBI:78533"/>
        <dbReference type="ChEBI" id="CHEBI:456215"/>
        <dbReference type="EC" id="6.1.1.11"/>
    </reaction>
</comment>
<comment type="catalytic activity">
    <reaction evidence="1">
        <text>tRNA(Sec) + L-serine + ATP = L-seryl-tRNA(Sec) + AMP + diphosphate + H(+)</text>
        <dbReference type="Rhea" id="RHEA:42580"/>
        <dbReference type="Rhea" id="RHEA-COMP:9742"/>
        <dbReference type="Rhea" id="RHEA-COMP:10128"/>
        <dbReference type="ChEBI" id="CHEBI:15378"/>
        <dbReference type="ChEBI" id="CHEBI:30616"/>
        <dbReference type="ChEBI" id="CHEBI:33019"/>
        <dbReference type="ChEBI" id="CHEBI:33384"/>
        <dbReference type="ChEBI" id="CHEBI:78442"/>
        <dbReference type="ChEBI" id="CHEBI:78533"/>
        <dbReference type="ChEBI" id="CHEBI:456215"/>
        <dbReference type="EC" id="6.1.1.11"/>
    </reaction>
</comment>
<comment type="pathway">
    <text evidence="1">Aminoacyl-tRNA biosynthesis; selenocysteinyl-tRNA(Sec) biosynthesis; L-seryl-tRNA(Sec) from L-serine and tRNA(Sec): step 1/1.</text>
</comment>
<comment type="subunit">
    <text evidence="1">Homodimer. The tRNA molecule binds across the dimer.</text>
</comment>
<comment type="subcellular location">
    <subcellularLocation>
        <location evidence="1">Cytoplasm</location>
    </subcellularLocation>
</comment>
<comment type="domain">
    <text evidence="1">Consists of two distinct domains, a catalytic core and a N-terminal extension that is involved in tRNA binding.</text>
</comment>
<comment type="similarity">
    <text evidence="1">Belongs to the class-II aminoacyl-tRNA synthetase family. Type-1 seryl-tRNA synthetase subfamily.</text>
</comment>
<feature type="chain" id="PRO_0000122001" description="Serine--tRNA ligase">
    <location>
        <begin position="1"/>
        <end position="425"/>
    </location>
</feature>
<feature type="binding site" evidence="1">
    <location>
        <begin position="231"/>
        <end position="233"/>
    </location>
    <ligand>
        <name>L-serine</name>
        <dbReference type="ChEBI" id="CHEBI:33384"/>
    </ligand>
</feature>
<feature type="binding site" evidence="1">
    <location>
        <begin position="262"/>
        <end position="264"/>
    </location>
    <ligand>
        <name>ATP</name>
        <dbReference type="ChEBI" id="CHEBI:30616"/>
    </ligand>
</feature>
<feature type="binding site" evidence="1">
    <location>
        <position position="285"/>
    </location>
    <ligand>
        <name>L-serine</name>
        <dbReference type="ChEBI" id="CHEBI:33384"/>
    </ligand>
</feature>
<feature type="binding site" evidence="1">
    <location>
        <begin position="349"/>
        <end position="352"/>
    </location>
    <ligand>
        <name>ATP</name>
        <dbReference type="ChEBI" id="CHEBI:30616"/>
    </ligand>
</feature>
<feature type="binding site" evidence="1">
    <location>
        <position position="385"/>
    </location>
    <ligand>
        <name>L-serine</name>
        <dbReference type="ChEBI" id="CHEBI:33384"/>
    </ligand>
</feature>
<gene>
    <name evidence="1" type="primary">serS</name>
    <name type="ordered locus">BH0024</name>
</gene>
<name>SYS_HALH5</name>
<reference key="1">
    <citation type="journal article" date="2000" name="Nucleic Acids Res.">
        <title>Complete genome sequence of the alkaliphilic bacterium Bacillus halodurans and genomic sequence comparison with Bacillus subtilis.</title>
        <authorList>
            <person name="Takami H."/>
            <person name="Nakasone K."/>
            <person name="Takaki Y."/>
            <person name="Maeno G."/>
            <person name="Sasaki R."/>
            <person name="Masui N."/>
            <person name="Fuji F."/>
            <person name="Hirama C."/>
            <person name="Nakamura Y."/>
            <person name="Ogasawara N."/>
            <person name="Kuhara S."/>
            <person name="Horikoshi K."/>
        </authorList>
    </citation>
    <scope>NUCLEOTIDE SEQUENCE [LARGE SCALE GENOMIC DNA]</scope>
    <source>
        <strain>ATCC BAA-125 / DSM 18197 / FERM 7344 / JCM 9153 / C-125</strain>
    </source>
</reference>
<dbReference type="EC" id="6.1.1.11" evidence="1"/>
<dbReference type="EMBL" id="BA000004">
    <property type="protein sequence ID" value="BAB03743.1"/>
    <property type="molecule type" value="Genomic_DNA"/>
</dbReference>
<dbReference type="PIR" id="H83652">
    <property type="entry name" value="H83652"/>
</dbReference>
<dbReference type="RefSeq" id="WP_010896208.1">
    <property type="nucleotide sequence ID" value="NC_002570.2"/>
</dbReference>
<dbReference type="SMR" id="Q9KGN4"/>
<dbReference type="STRING" id="272558.gene:10725842"/>
<dbReference type="KEGG" id="bha:BH0024"/>
<dbReference type="eggNOG" id="COG0172">
    <property type="taxonomic scope" value="Bacteria"/>
</dbReference>
<dbReference type="HOGENOM" id="CLU_023797_1_1_9"/>
<dbReference type="OrthoDB" id="9804647at2"/>
<dbReference type="UniPathway" id="UPA00906">
    <property type="reaction ID" value="UER00895"/>
</dbReference>
<dbReference type="Proteomes" id="UP000001258">
    <property type="component" value="Chromosome"/>
</dbReference>
<dbReference type="GO" id="GO:0005737">
    <property type="term" value="C:cytoplasm"/>
    <property type="evidence" value="ECO:0007669"/>
    <property type="project" value="UniProtKB-SubCell"/>
</dbReference>
<dbReference type="GO" id="GO:0005524">
    <property type="term" value="F:ATP binding"/>
    <property type="evidence" value="ECO:0007669"/>
    <property type="project" value="UniProtKB-UniRule"/>
</dbReference>
<dbReference type="GO" id="GO:0140096">
    <property type="term" value="F:catalytic activity, acting on a protein"/>
    <property type="evidence" value="ECO:0007669"/>
    <property type="project" value="UniProtKB-ARBA"/>
</dbReference>
<dbReference type="GO" id="GO:0004828">
    <property type="term" value="F:serine-tRNA ligase activity"/>
    <property type="evidence" value="ECO:0007669"/>
    <property type="project" value="UniProtKB-UniRule"/>
</dbReference>
<dbReference type="GO" id="GO:0016740">
    <property type="term" value="F:transferase activity"/>
    <property type="evidence" value="ECO:0007669"/>
    <property type="project" value="UniProtKB-ARBA"/>
</dbReference>
<dbReference type="GO" id="GO:0016260">
    <property type="term" value="P:selenocysteine biosynthetic process"/>
    <property type="evidence" value="ECO:0007669"/>
    <property type="project" value="UniProtKB-UniRule"/>
</dbReference>
<dbReference type="GO" id="GO:0006434">
    <property type="term" value="P:seryl-tRNA aminoacylation"/>
    <property type="evidence" value="ECO:0007669"/>
    <property type="project" value="UniProtKB-UniRule"/>
</dbReference>
<dbReference type="CDD" id="cd00770">
    <property type="entry name" value="SerRS_core"/>
    <property type="match status" value="1"/>
</dbReference>
<dbReference type="Gene3D" id="3.30.930.10">
    <property type="entry name" value="Bira Bifunctional Protein, Domain 2"/>
    <property type="match status" value="1"/>
</dbReference>
<dbReference type="Gene3D" id="1.10.287.40">
    <property type="entry name" value="Serine-tRNA synthetase, tRNA binding domain"/>
    <property type="match status" value="1"/>
</dbReference>
<dbReference type="HAMAP" id="MF_00176">
    <property type="entry name" value="Ser_tRNA_synth_type1"/>
    <property type="match status" value="1"/>
</dbReference>
<dbReference type="InterPro" id="IPR002314">
    <property type="entry name" value="aa-tRNA-synt_IIb"/>
</dbReference>
<dbReference type="InterPro" id="IPR006195">
    <property type="entry name" value="aa-tRNA-synth_II"/>
</dbReference>
<dbReference type="InterPro" id="IPR045864">
    <property type="entry name" value="aa-tRNA-synth_II/BPL/LPL"/>
</dbReference>
<dbReference type="InterPro" id="IPR002317">
    <property type="entry name" value="Ser-tRNA-ligase_type_1"/>
</dbReference>
<dbReference type="InterPro" id="IPR015866">
    <property type="entry name" value="Ser-tRNA-synth_1_N"/>
</dbReference>
<dbReference type="InterPro" id="IPR042103">
    <property type="entry name" value="SerRS_1_N_sf"/>
</dbReference>
<dbReference type="InterPro" id="IPR033729">
    <property type="entry name" value="SerRS_core"/>
</dbReference>
<dbReference type="InterPro" id="IPR010978">
    <property type="entry name" value="tRNA-bd_arm"/>
</dbReference>
<dbReference type="NCBIfam" id="TIGR00414">
    <property type="entry name" value="serS"/>
    <property type="match status" value="1"/>
</dbReference>
<dbReference type="PANTHER" id="PTHR43697:SF1">
    <property type="entry name" value="SERINE--TRNA LIGASE"/>
    <property type="match status" value="1"/>
</dbReference>
<dbReference type="PANTHER" id="PTHR43697">
    <property type="entry name" value="SERYL-TRNA SYNTHETASE"/>
    <property type="match status" value="1"/>
</dbReference>
<dbReference type="Pfam" id="PF02403">
    <property type="entry name" value="Seryl_tRNA_N"/>
    <property type="match status" value="1"/>
</dbReference>
<dbReference type="Pfam" id="PF00587">
    <property type="entry name" value="tRNA-synt_2b"/>
    <property type="match status" value="1"/>
</dbReference>
<dbReference type="PIRSF" id="PIRSF001529">
    <property type="entry name" value="Ser-tRNA-synth_IIa"/>
    <property type="match status" value="1"/>
</dbReference>
<dbReference type="PRINTS" id="PR00981">
    <property type="entry name" value="TRNASYNTHSER"/>
</dbReference>
<dbReference type="SUPFAM" id="SSF55681">
    <property type="entry name" value="Class II aaRS and biotin synthetases"/>
    <property type="match status" value="1"/>
</dbReference>
<dbReference type="SUPFAM" id="SSF46589">
    <property type="entry name" value="tRNA-binding arm"/>
    <property type="match status" value="1"/>
</dbReference>
<dbReference type="PROSITE" id="PS50862">
    <property type="entry name" value="AA_TRNA_LIGASE_II"/>
    <property type="match status" value="1"/>
</dbReference>
<accession>Q9KGN4</accession>
<organism>
    <name type="scientific">Halalkalibacterium halodurans (strain ATCC BAA-125 / DSM 18197 / FERM 7344 / JCM 9153 / C-125)</name>
    <name type="common">Bacillus halodurans</name>
    <dbReference type="NCBI Taxonomy" id="272558"/>
    <lineage>
        <taxon>Bacteria</taxon>
        <taxon>Bacillati</taxon>
        <taxon>Bacillota</taxon>
        <taxon>Bacilli</taxon>
        <taxon>Bacillales</taxon>
        <taxon>Bacillaceae</taxon>
        <taxon>Halalkalibacterium (ex Joshi et al. 2022)</taxon>
    </lineage>
</organism>
<proteinExistence type="inferred from homology"/>
<evidence type="ECO:0000255" key="1">
    <source>
        <dbReference type="HAMAP-Rule" id="MF_00176"/>
    </source>
</evidence>
<keyword id="KW-0030">Aminoacyl-tRNA synthetase</keyword>
<keyword id="KW-0067">ATP-binding</keyword>
<keyword id="KW-0963">Cytoplasm</keyword>
<keyword id="KW-0436">Ligase</keyword>
<keyword id="KW-0547">Nucleotide-binding</keyword>
<keyword id="KW-0648">Protein biosynthesis</keyword>
<keyword id="KW-1185">Reference proteome</keyword>